<organism>
    <name type="scientific">Mycoplasma genitalium (strain ATCC 33530 / DSM 19775 / NCTC 10195 / G37)</name>
    <name type="common">Mycoplasmoides genitalium</name>
    <dbReference type="NCBI Taxonomy" id="243273"/>
    <lineage>
        <taxon>Bacteria</taxon>
        <taxon>Bacillati</taxon>
        <taxon>Mycoplasmatota</taxon>
        <taxon>Mycoplasmoidales</taxon>
        <taxon>Mycoplasmoidaceae</taxon>
        <taxon>Mycoplasmoides</taxon>
    </lineage>
</organism>
<reference key="1">
    <citation type="journal article" date="1995" name="Science">
        <title>The minimal gene complement of Mycoplasma genitalium.</title>
        <authorList>
            <person name="Fraser C.M."/>
            <person name="Gocayne J.D."/>
            <person name="White O."/>
            <person name="Adams M.D."/>
            <person name="Clayton R.A."/>
            <person name="Fleischmann R.D."/>
            <person name="Bult C.J."/>
            <person name="Kerlavage A.R."/>
            <person name="Sutton G.G."/>
            <person name="Kelley J.M."/>
            <person name="Fritchman J.L."/>
            <person name="Weidman J.F."/>
            <person name="Small K.V."/>
            <person name="Sandusky M."/>
            <person name="Fuhrmann J.L."/>
            <person name="Nguyen D.T."/>
            <person name="Utterback T.R."/>
            <person name="Saudek D.M."/>
            <person name="Phillips C.A."/>
            <person name="Merrick J.M."/>
            <person name="Tomb J.-F."/>
            <person name="Dougherty B.A."/>
            <person name="Bott K.F."/>
            <person name="Hu P.-C."/>
            <person name="Lucier T.S."/>
            <person name="Peterson S.N."/>
            <person name="Smith H.O."/>
            <person name="Hutchison C.A. III"/>
            <person name="Venter J.C."/>
        </authorList>
    </citation>
    <scope>NUCLEOTIDE SEQUENCE [LARGE SCALE GENOMIC DNA]</scope>
    <source>
        <strain>ATCC 33530 / DSM 19775 / NCTC 10195 / G37</strain>
    </source>
</reference>
<protein>
    <recommendedName>
        <fullName evidence="3">Large ribosomal subunit protein bL32</fullName>
    </recommendedName>
    <alternativeName>
        <fullName>50S ribosomal protein L32</fullName>
    </alternativeName>
</protein>
<feature type="initiator methionine" description="Removed" evidence="1">
    <location>
        <position position="1"/>
    </location>
</feature>
<feature type="chain" id="PRO_0000172365" description="Large ribosomal subunit protein bL32">
    <location>
        <begin position="2"/>
        <end position="57"/>
    </location>
</feature>
<feature type="region of interest" description="Disordered" evidence="2">
    <location>
        <begin position="1"/>
        <end position="20"/>
    </location>
</feature>
<feature type="compositionally biased region" description="Basic residues" evidence="2">
    <location>
        <begin position="7"/>
        <end position="18"/>
    </location>
</feature>
<evidence type="ECO:0000250" key="1"/>
<evidence type="ECO:0000256" key="2">
    <source>
        <dbReference type="SAM" id="MobiDB-lite"/>
    </source>
</evidence>
<evidence type="ECO:0000305" key="3"/>
<accession>P47603</accession>
<dbReference type="EMBL" id="L43967">
    <property type="protein sequence ID" value="AAC71589.1"/>
    <property type="molecule type" value="Genomic_DNA"/>
</dbReference>
<dbReference type="PIR" id="B64240">
    <property type="entry name" value="B64240"/>
</dbReference>
<dbReference type="RefSeq" id="WP_009885820.1">
    <property type="nucleotide sequence ID" value="NC_000908.2"/>
</dbReference>
<dbReference type="SMR" id="P47603"/>
<dbReference type="FunCoup" id="P47603">
    <property type="interactions" value="85"/>
</dbReference>
<dbReference type="STRING" id="243273.MG_363"/>
<dbReference type="GeneID" id="88282661"/>
<dbReference type="KEGG" id="mge:MG_363"/>
<dbReference type="eggNOG" id="COG0333">
    <property type="taxonomic scope" value="Bacteria"/>
</dbReference>
<dbReference type="HOGENOM" id="CLU_129084_1_3_14"/>
<dbReference type="InParanoid" id="P47603"/>
<dbReference type="OrthoDB" id="9812874at2"/>
<dbReference type="BioCyc" id="MGEN243273:G1GJ2-456-MONOMER"/>
<dbReference type="Proteomes" id="UP000000807">
    <property type="component" value="Chromosome"/>
</dbReference>
<dbReference type="GO" id="GO:0022625">
    <property type="term" value="C:cytosolic large ribosomal subunit"/>
    <property type="evidence" value="ECO:0000318"/>
    <property type="project" value="GO_Central"/>
</dbReference>
<dbReference type="GO" id="GO:0003735">
    <property type="term" value="F:structural constituent of ribosome"/>
    <property type="evidence" value="ECO:0000318"/>
    <property type="project" value="GO_Central"/>
</dbReference>
<dbReference type="GO" id="GO:0006412">
    <property type="term" value="P:translation"/>
    <property type="evidence" value="ECO:0007669"/>
    <property type="project" value="UniProtKB-UniRule"/>
</dbReference>
<dbReference type="HAMAP" id="MF_00340">
    <property type="entry name" value="Ribosomal_bL32"/>
    <property type="match status" value="1"/>
</dbReference>
<dbReference type="InterPro" id="IPR002677">
    <property type="entry name" value="Ribosomal_bL32"/>
</dbReference>
<dbReference type="InterPro" id="IPR044957">
    <property type="entry name" value="Ribosomal_bL32_bact"/>
</dbReference>
<dbReference type="InterPro" id="IPR011332">
    <property type="entry name" value="Ribosomal_zn-bd"/>
</dbReference>
<dbReference type="NCBIfam" id="TIGR01031">
    <property type="entry name" value="rpmF_bact"/>
    <property type="match status" value="1"/>
</dbReference>
<dbReference type="PANTHER" id="PTHR35534">
    <property type="entry name" value="50S RIBOSOMAL PROTEIN L32"/>
    <property type="match status" value="1"/>
</dbReference>
<dbReference type="PANTHER" id="PTHR35534:SF1">
    <property type="entry name" value="LARGE RIBOSOMAL SUBUNIT PROTEIN BL32"/>
    <property type="match status" value="1"/>
</dbReference>
<dbReference type="Pfam" id="PF01783">
    <property type="entry name" value="Ribosomal_L32p"/>
    <property type="match status" value="1"/>
</dbReference>
<dbReference type="SUPFAM" id="SSF57829">
    <property type="entry name" value="Zn-binding ribosomal proteins"/>
    <property type="match status" value="1"/>
</dbReference>
<comment type="similarity">
    <text evidence="3">Belongs to the bacterial ribosomal protein bL32 family.</text>
</comment>
<sequence>MAVQQRRSSKHRRDKRRSHDALTLQTLSVCKKCGKKKLSHRVCSCGMYGELRVKKAH</sequence>
<keyword id="KW-1185">Reference proteome</keyword>
<keyword id="KW-0687">Ribonucleoprotein</keyword>
<keyword id="KW-0689">Ribosomal protein</keyword>
<proteinExistence type="inferred from homology"/>
<gene>
    <name type="primary">rpmF</name>
    <name type="synonym">rpl32</name>
    <name type="ordered locus">MG363</name>
</gene>
<name>RL32_MYCGE</name>